<keyword id="KW-0963">Cytoplasm</keyword>
<keyword id="KW-0489">Methyltransferase</keyword>
<keyword id="KW-1185">Reference proteome</keyword>
<keyword id="KW-0698">rRNA processing</keyword>
<keyword id="KW-0949">S-adenosyl-L-methionine</keyword>
<keyword id="KW-0808">Transferase</keyword>
<gene>
    <name evidence="1" type="primary">rlmM</name>
    <name type="ordered locus">SO_1536</name>
</gene>
<proteinExistence type="inferred from homology"/>
<sequence>MKNLFLFCRAGYEKECAAEIQQRAAELNVGGFVKTNNNDAYVVYQCFEDDGADTLVKQLPLDSLIFARQMFAASELLADLPESDRVSPIVAALSEVSKAGELRVETPDTNEAKELSAFCRKFTVPLRQHLKKSGSLLAQENPKRPIIHVCFIGPGRAYAGYSLSNNSSPNFMGIPRLKMAADAPSRSSLKLDEAFAQFVPKEEQEERVRSGMNAVDLGACPGGWTYQLVRRGMFVSAVDNGPMNEKLMETGQVKHFREDGFRFEPQRKNIYWLVCDMVEKPARVAELIEAWAINGWFKEAIFNLKLPMKSRYKEVMAILNTMQDILKENGITEFKLQCKHLYHDRDEVTVHLWLKPSQPWN</sequence>
<name>RLMM_SHEON</name>
<protein>
    <recommendedName>
        <fullName evidence="1">Ribosomal RNA large subunit methyltransferase M</fullName>
        <ecNumber evidence="1">2.1.1.186</ecNumber>
    </recommendedName>
    <alternativeName>
        <fullName evidence="1">23S rRNA (cytidine2498-2'-O)-methyltransferase</fullName>
    </alternativeName>
    <alternativeName>
        <fullName evidence="1">23S rRNA 2'-O-ribose methyltransferase RlmM</fullName>
    </alternativeName>
</protein>
<reference key="1">
    <citation type="journal article" date="2002" name="Nat. Biotechnol.">
        <title>Genome sequence of the dissimilatory metal ion-reducing bacterium Shewanella oneidensis.</title>
        <authorList>
            <person name="Heidelberg J.F."/>
            <person name="Paulsen I.T."/>
            <person name="Nelson K.E."/>
            <person name="Gaidos E.J."/>
            <person name="Nelson W.C."/>
            <person name="Read T.D."/>
            <person name="Eisen J.A."/>
            <person name="Seshadri R."/>
            <person name="Ward N.L."/>
            <person name="Methe B.A."/>
            <person name="Clayton R.A."/>
            <person name="Meyer T."/>
            <person name="Tsapin A."/>
            <person name="Scott J."/>
            <person name="Beanan M.J."/>
            <person name="Brinkac L.M."/>
            <person name="Daugherty S.C."/>
            <person name="DeBoy R.T."/>
            <person name="Dodson R.J."/>
            <person name="Durkin A.S."/>
            <person name="Haft D.H."/>
            <person name="Kolonay J.F."/>
            <person name="Madupu R."/>
            <person name="Peterson J.D."/>
            <person name="Umayam L.A."/>
            <person name="White O."/>
            <person name="Wolf A.M."/>
            <person name="Vamathevan J.J."/>
            <person name="Weidman J.F."/>
            <person name="Impraim M."/>
            <person name="Lee K."/>
            <person name="Berry K.J."/>
            <person name="Lee C."/>
            <person name="Mueller J."/>
            <person name="Khouri H.M."/>
            <person name="Gill J."/>
            <person name="Utterback T.R."/>
            <person name="McDonald L.A."/>
            <person name="Feldblyum T.V."/>
            <person name="Smith H.O."/>
            <person name="Venter J.C."/>
            <person name="Nealson K.H."/>
            <person name="Fraser C.M."/>
        </authorList>
    </citation>
    <scope>NUCLEOTIDE SEQUENCE [LARGE SCALE GENOMIC DNA]</scope>
    <source>
        <strain>ATCC 700550 / JCM 31522 / CIP 106686 / LMG 19005 / NCIMB 14063 / MR-1</strain>
    </source>
</reference>
<evidence type="ECO:0000255" key="1">
    <source>
        <dbReference type="HAMAP-Rule" id="MF_01551"/>
    </source>
</evidence>
<comment type="function">
    <text evidence="1">Catalyzes the 2'-O-methylation at nucleotide C2498 in 23S rRNA.</text>
</comment>
<comment type="catalytic activity">
    <reaction evidence="1">
        <text>cytidine(2498) in 23S rRNA + S-adenosyl-L-methionine = 2'-O-methylcytidine(2498) in 23S rRNA + S-adenosyl-L-homocysteine + H(+)</text>
        <dbReference type="Rhea" id="RHEA:42788"/>
        <dbReference type="Rhea" id="RHEA-COMP:10244"/>
        <dbReference type="Rhea" id="RHEA-COMP:10245"/>
        <dbReference type="ChEBI" id="CHEBI:15378"/>
        <dbReference type="ChEBI" id="CHEBI:57856"/>
        <dbReference type="ChEBI" id="CHEBI:59789"/>
        <dbReference type="ChEBI" id="CHEBI:74495"/>
        <dbReference type="ChEBI" id="CHEBI:82748"/>
        <dbReference type="EC" id="2.1.1.186"/>
    </reaction>
</comment>
<comment type="subunit">
    <text evidence="1">Monomer.</text>
</comment>
<comment type="subcellular location">
    <subcellularLocation>
        <location evidence="1">Cytoplasm</location>
    </subcellularLocation>
</comment>
<comment type="similarity">
    <text evidence="1">Belongs to the class I-like SAM-binding methyltransferase superfamily. RNA methyltransferase RlmE family. RlmM subfamily.</text>
</comment>
<feature type="chain" id="PRO_0000070426" description="Ribosomal RNA large subunit methyltransferase M">
    <location>
        <begin position="1"/>
        <end position="361"/>
    </location>
</feature>
<feature type="active site" description="Proton acceptor" evidence="1">
    <location>
        <position position="305"/>
    </location>
</feature>
<feature type="binding site" evidence="1">
    <location>
        <position position="187"/>
    </location>
    <ligand>
        <name>S-adenosyl-L-methionine</name>
        <dbReference type="ChEBI" id="CHEBI:59789"/>
    </ligand>
</feature>
<feature type="binding site" evidence="1">
    <location>
        <begin position="220"/>
        <end position="223"/>
    </location>
    <ligand>
        <name>S-adenosyl-L-methionine</name>
        <dbReference type="ChEBI" id="CHEBI:59789"/>
    </ligand>
</feature>
<feature type="binding site" evidence="1">
    <location>
        <position position="239"/>
    </location>
    <ligand>
        <name>S-adenosyl-L-methionine</name>
        <dbReference type="ChEBI" id="CHEBI:59789"/>
    </ligand>
</feature>
<feature type="binding site" evidence="1">
    <location>
        <position position="259"/>
    </location>
    <ligand>
        <name>S-adenosyl-L-methionine</name>
        <dbReference type="ChEBI" id="CHEBI:59789"/>
    </ligand>
</feature>
<feature type="binding site" evidence="1">
    <location>
        <position position="276"/>
    </location>
    <ligand>
        <name>S-adenosyl-L-methionine</name>
        <dbReference type="ChEBI" id="CHEBI:59789"/>
    </ligand>
</feature>
<accession>Q8EGQ9</accession>
<dbReference type="EC" id="2.1.1.186" evidence="1"/>
<dbReference type="EMBL" id="AE014299">
    <property type="protein sequence ID" value="AAN54596.1"/>
    <property type="molecule type" value="Genomic_DNA"/>
</dbReference>
<dbReference type="RefSeq" id="NP_717152.1">
    <property type="nucleotide sequence ID" value="NC_004347.2"/>
</dbReference>
<dbReference type="RefSeq" id="WP_011071714.1">
    <property type="nucleotide sequence ID" value="NC_004347.2"/>
</dbReference>
<dbReference type="SMR" id="Q8EGQ9"/>
<dbReference type="STRING" id="211586.SO_1536"/>
<dbReference type="PaxDb" id="211586-SO_1536"/>
<dbReference type="KEGG" id="son:SO_1536"/>
<dbReference type="PATRIC" id="fig|211586.12.peg.1479"/>
<dbReference type="eggNOG" id="COG2933">
    <property type="taxonomic scope" value="Bacteria"/>
</dbReference>
<dbReference type="HOGENOM" id="CLU_043780_0_0_6"/>
<dbReference type="OrthoDB" id="154490at2"/>
<dbReference type="PhylomeDB" id="Q8EGQ9"/>
<dbReference type="BioCyc" id="SONE211586:G1GMP-1419-MONOMER"/>
<dbReference type="Proteomes" id="UP000008186">
    <property type="component" value="Chromosome"/>
</dbReference>
<dbReference type="GO" id="GO:0005737">
    <property type="term" value="C:cytoplasm"/>
    <property type="evidence" value="ECO:0007669"/>
    <property type="project" value="UniProtKB-SubCell"/>
</dbReference>
<dbReference type="GO" id="GO:0070677">
    <property type="term" value="F:rRNA (cytosine-2'-O-)-methyltransferase activity"/>
    <property type="evidence" value="ECO:0000318"/>
    <property type="project" value="GO_Central"/>
</dbReference>
<dbReference type="GO" id="GO:0006364">
    <property type="term" value="P:rRNA processing"/>
    <property type="evidence" value="ECO:0000318"/>
    <property type="project" value="GO_Central"/>
</dbReference>
<dbReference type="Gene3D" id="3.30.2300.20">
    <property type="match status" value="1"/>
</dbReference>
<dbReference type="Gene3D" id="3.30.70.2810">
    <property type="match status" value="1"/>
</dbReference>
<dbReference type="Gene3D" id="3.40.50.150">
    <property type="entry name" value="Vaccinia Virus protein VP39"/>
    <property type="match status" value="1"/>
</dbReference>
<dbReference type="HAMAP" id="MF_01551">
    <property type="entry name" value="23SrRNA_methyltr_M"/>
    <property type="match status" value="1"/>
</dbReference>
<dbReference type="InterPro" id="IPR040739">
    <property type="entry name" value="RlmM_FDX"/>
</dbReference>
<dbReference type="InterPro" id="IPR048646">
    <property type="entry name" value="RlmM_THUMP-like"/>
</dbReference>
<dbReference type="InterPro" id="IPR002877">
    <property type="entry name" value="RNA_MeTrfase_FtsJ_dom"/>
</dbReference>
<dbReference type="InterPro" id="IPR011224">
    <property type="entry name" value="rRNA_MeTrfase_M"/>
</dbReference>
<dbReference type="InterPro" id="IPR029063">
    <property type="entry name" value="SAM-dependent_MTases_sf"/>
</dbReference>
<dbReference type="NCBIfam" id="NF008734">
    <property type="entry name" value="PRK11760.1"/>
    <property type="match status" value="1"/>
</dbReference>
<dbReference type="PANTHER" id="PTHR37524">
    <property type="entry name" value="RIBOSOMAL RNA LARGE SUBUNIT METHYLTRANSFERASE M"/>
    <property type="match status" value="1"/>
</dbReference>
<dbReference type="PANTHER" id="PTHR37524:SF2">
    <property type="entry name" value="RIBOSOMAL RNA METHYLTRANSFERASE FTSJ DOMAIN-CONTAINING PROTEIN"/>
    <property type="match status" value="1"/>
</dbReference>
<dbReference type="Pfam" id="PF01728">
    <property type="entry name" value="FtsJ"/>
    <property type="match status" value="1"/>
</dbReference>
<dbReference type="Pfam" id="PF18125">
    <property type="entry name" value="RlmM_FDX"/>
    <property type="match status" value="1"/>
</dbReference>
<dbReference type="Pfam" id="PF21239">
    <property type="entry name" value="RLMM_N"/>
    <property type="match status" value="1"/>
</dbReference>
<dbReference type="PIRSF" id="PIRSF028774">
    <property type="entry name" value="UCP028774"/>
    <property type="match status" value="1"/>
</dbReference>
<dbReference type="SUPFAM" id="SSF53335">
    <property type="entry name" value="S-adenosyl-L-methionine-dependent methyltransferases"/>
    <property type="match status" value="1"/>
</dbReference>
<organism>
    <name type="scientific">Shewanella oneidensis (strain ATCC 700550 / JCM 31522 / CIP 106686 / LMG 19005 / NCIMB 14063 / MR-1)</name>
    <dbReference type="NCBI Taxonomy" id="211586"/>
    <lineage>
        <taxon>Bacteria</taxon>
        <taxon>Pseudomonadati</taxon>
        <taxon>Pseudomonadota</taxon>
        <taxon>Gammaproteobacteria</taxon>
        <taxon>Alteromonadales</taxon>
        <taxon>Shewanellaceae</taxon>
        <taxon>Shewanella</taxon>
    </lineage>
</organism>